<gene>
    <name evidence="1" type="primary">yidC</name>
    <name type="ordered locus">Geob_3838</name>
</gene>
<keyword id="KW-0997">Cell inner membrane</keyword>
<keyword id="KW-1003">Cell membrane</keyword>
<keyword id="KW-0143">Chaperone</keyword>
<keyword id="KW-0472">Membrane</keyword>
<keyword id="KW-0653">Protein transport</keyword>
<keyword id="KW-1185">Reference proteome</keyword>
<keyword id="KW-0812">Transmembrane</keyword>
<keyword id="KW-1133">Transmembrane helix</keyword>
<keyword id="KW-0813">Transport</keyword>
<proteinExistence type="inferred from homology"/>
<evidence type="ECO:0000255" key="1">
    <source>
        <dbReference type="HAMAP-Rule" id="MF_01810"/>
    </source>
</evidence>
<organism>
    <name type="scientific">Geotalea daltonii (strain DSM 22248 / JCM 15807 / FRC-32)</name>
    <name type="common">Geobacter daltonii</name>
    <dbReference type="NCBI Taxonomy" id="316067"/>
    <lineage>
        <taxon>Bacteria</taxon>
        <taxon>Pseudomonadati</taxon>
        <taxon>Thermodesulfobacteriota</taxon>
        <taxon>Desulfuromonadia</taxon>
        <taxon>Geobacterales</taxon>
        <taxon>Geobacteraceae</taxon>
        <taxon>Geotalea</taxon>
    </lineage>
</organism>
<dbReference type="EMBL" id="CP001390">
    <property type="protein sequence ID" value="ACM22175.1"/>
    <property type="molecule type" value="Genomic_DNA"/>
</dbReference>
<dbReference type="RefSeq" id="WP_012648900.1">
    <property type="nucleotide sequence ID" value="NC_011979.1"/>
</dbReference>
<dbReference type="SMR" id="B9M7R9"/>
<dbReference type="STRING" id="316067.Geob_3838"/>
<dbReference type="KEGG" id="geo:Geob_3838"/>
<dbReference type="eggNOG" id="COG0706">
    <property type="taxonomic scope" value="Bacteria"/>
</dbReference>
<dbReference type="HOGENOM" id="CLU_016535_3_0_7"/>
<dbReference type="OrthoDB" id="9780552at2"/>
<dbReference type="Proteomes" id="UP000007721">
    <property type="component" value="Chromosome"/>
</dbReference>
<dbReference type="GO" id="GO:0005886">
    <property type="term" value="C:plasma membrane"/>
    <property type="evidence" value="ECO:0007669"/>
    <property type="project" value="UniProtKB-SubCell"/>
</dbReference>
<dbReference type="GO" id="GO:0032977">
    <property type="term" value="F:membrane insertase activity"/>
    <property type="evidence" value="ECO:0007669"/>
    <property type="project" value="InterPro"/>
</dbReference>
<dbReference type="GO" id="GO:0051205">
    <property type="term" value="P:protein insertion into membrane"/>
    <property type="evidence" value="ECO:0007669"/>
    <property type="project" value="TreeGrafter"/>
</dbReference>
<dbReference type="GO" id="GO:0015031">
    <property type="term" value="P:protein transport"/>
    <property type="evidence" value="ECO:0007669"/>
    <property type="project" value="UniProtKB-KW"/>
</dbReference>
<dbReference type="CDD" id="cd20070">
    <property type="entry name" value="5TM_YidC_Alb3"/>
    <property type="match status" value="1"/>
</dbReference>
<dbReference type="CDD" id="cd19961">
    <property type="entry name" value="EcYidC-like_peri"/>
    <property type="match status" value="1"/>
</dbReference>
<dbReference type="Gene3D" id="2.70.98.90">
    <property type="match status" value="1"/>
</dbReference>
<dbReference type="HAMAP" id="MF_01810">
    <property type="entry name" value="YidC_type1"/>
    <property type="match status" value="1"/>
</dbReference>
<dbReference type="InterPro" id="IPR019998">
    <property type="entry name" value="Membr_insert_YidC"/>
</dbReference>
<dbReference type="InterPro" id="IPR028053">
    <property type="entry name" value="Membr_insert_YidC_N"/>
</dbReference>
<dbReference type="InterPro" id="IPR001708">
    <property type="entry name" value="YidC/ALB3/OXA1/COX18"/>
</dbReference>
<dbReference type="InterPro" id="IPR028055">
    <property type="entry name" value="YidC/Oxa/ALB_C"/>
</dbReference>
<dbReference type="InterPro" id="IPR047196">
    <property type="entry name" value="YidC_ALB_C"/>
</dbReference>
<dbReference type="InterPro" id="IPR038221">
    <property type="entry name" value="YidC_periplasmic_sf"/>
</dbReference>
<dbReference type="NCBIfam" id="NF002352">
    <property type="entry name" value="PRK01318.1-3"/>
    <property type="match status" value="1"/>
</dbReference>
<dbReference type="NCBIfam" id="NF002353">
    <property type="entry name" value="PRK01318.1-4"/>
    <property type="match status" value="1"/>
</dbReference>
<dbReference type="NCBIfam" id="TIGR03593">
    <property type="entry name" value="yidC_nterm"/>
    <property type="match status" value="1"/>
</dbReference>
<dbReference type="NCBIfam" id="TIGR03592">
    <property type="entry name" value="yidC_oxa1_cterm"/>
    <property type="match status" value="1"/>
</dbReference>
<dbReference type="PANTHER" id="PTHR12428:SF65">
    <property type="entry name" value="CYTOCHROME C OXIDASE ASSEMBLY PROTEIN COX18, MITOCHONDRIAL"/>
    <property type="match status" value="1"/>
</dbReference>
<dbReference type="PANTHER" id="PTHR12428">
    <property type="entry name" value="OXA1"/>
    <property type="match status" value="1"/>
</dbReference>
<dbReference type="Pfam" id="PF02096">
    <property type="entry name" value="60KD_IMP"/>
    <property type="match status" value="1"/>
</dbReference>
<dbReference type="Pfam" id="PF14849">
    <property type="entry name" value="YidC_periplas"/>
    <property type="match status" value="1"/>
</dbReference>
<dbReference type="PRINTS" id="PR00701">
    <property type="entry name" value="60KDINNERMP"/>
</dbReference>
<dbReference type="PRINTS" id="PR01900">
    <property type="entry name" value="YIDCPROTEIN"/>
</dbReference>
<feature type="chain" id="PRO_1000187671" description="Membrane protein insertase YidC">
    <location>
        <begin position="1"/>
        <end position="530"/>
    </location>
</feature>
<feature type="transmembrane region" description="Helical" evidence="1">
    <location>
        <begin position="5"/>
        <end position="25"/>
    </location>
</feature>
<feature type="transmembrane region" description="Helical" evidence="1">
    <location>
        <begin position="348"/>
        <end position="368"/>
    </location>
</feature>
<feature type="transmembrane region" description="Helical" evidence="1">
    <location>
        <begin position="418"/>
        <end position="438"/>
    </location>
</feature>
<feature type="transmembrane region" description="Helical" evidence="1">
    <location>
        <begin position="492"/>
        <end position="512"/>
    </location>
</feature>
<reference key="1">
    <citation type="submission" date="2009-01" db="EMBL/GenBank/DDBJ databases">
        <title>Complete sequence of Geobacter sp. FRC-32.</title>
        <authorList>
            <consortium name="US DOE Joint Genome Institute"/>
            <person name="Lucas S."/>
            <person name="Copeland A."/>
            <person name="Lapidus A."/>
            <person name="Glavina del Rio T."/>
            <person name="Dalin E."/>
            <person name="Tice H."/>
            <person name="Bruce D."/>
            <person name="Goodwin L."/>
            <person name="Pitluck S."/>
            <person name="Saunders E."/>
            <person name="Brettin T."/>
            <person name="Detter J.C."/>
            <person name="Han C."/>
            <person name="Larimer F."/>
            <person name="Land M."/>
            <person name="Hauser L."/>
            <person name="Kyrpides N."/>
            <person name="Ovchinnikova G."/>
            <person name="Kostka J."/>
            <person name="Richardson P."/>
        </authorList>
    </citation>
    <scope>NUCLEOTIDE SEQUENCE [LARGE SCALE GENOMIC DNA]</scope>
    <source>
        <strain>DSM 22248 / JCM 15807 / FRC-32</strain>
    </source>
</reference>
<accession>B9M7R9</accession>
<sequence>MEKRVVIAVILSIVVLYAFSYMFPPPVANQKEKAGPVAAVQSQPSSAKLSAIDSVPAAATPQAGLAARNIVVDTDLFIAVFSTKGGGLQSFQLKHYKDKAGAVGRDIVLKNESDGDKLSLLSEGKSFGLEPSLVFQSSAKDTKLAGTEKSSIEFTVTSQTGVILKKVYSFSGNGYGINLHQELINTGSSRVEGAISLINYNRLVAETGDGRYEVYGPVTMAGDKVITDKVSDIAKGPKQFDNNVSWSAFADKYFMDAVIAVKNSIASARVAKISDNYVQTNVTSSPLSLNPGQSASMDYRLFYGPKDLDILKAQGSRLEEAIDFGWFSALAKPLLRSIKFFYSYTHNYGLAIIIITIILKVLFFPLTHKSYKSMKEMQKLQPKMVELKEKFKNDRDAMNRAVMDLYKTHKVNPMGGCLPMLVQIPVFFALYKALMFSIELRHAPFVLWITDLSAKDPYYVTPIIMGVTMFIQQKMTPTNMDPIQAKMMLALPVVFTFMFLNFPAGLVLYWLINNILTIAQQAYINKSLPA</sequence>
<protein>
    <recommendedName>
        <fullName evidence="1">Membrane protein insertase YidC</fullName>
    </recommendedName>
    <alternativeName>
        <fullName evidence="1">Foldase YidC</fullName>
    </alternativeName>
    <alternativeName>
        <fullName evidence="1">Membrane integrase YidC</fullName>
    </alternativeName>
    <alternativeName>
        <fullName evidence="1">Membrane protein YidC</fullName>
    </alternativeName>
</protein>
<comment type="function">
    <text evidence="1">Required for the insertion and/or proper folding and/or complex formation of integral membrane proteins into the membrane. Involved in integration of membrane proteins that insert both dependently and independently of the Sec translocase complex, as well as at least some lipoproteins. Aids folding of multispanning membrane proteins.</text>
</comment>
<comment type="subunit">
    <text evidence="1">Interacts with the Sec translocase complex via SecD. Specifically interacts with transmembrane segments of nascent integral membrane proteins during membrane integration.</text>
</comment>
<comment type="subcellular location">
    <subcellularLocation>
        <location evidence="1">Cell inner membrane</location>
        <topology evidence="1">Multi-pass membrane protein</topology>
    </subcellularLocation>
</comment>
<comment type="similarity">
    <text evidence="1">Belongs to the OXA1/ALB3/YidC family. Type 1 subfamily.</text>
</comment>
<name>YIDC_GEODF</name>